<feature type="chain" id="PRO_0000415373" description="AN1-type zinc finger protein 5">
    <location>
        <begin position="1"/>
        <end position="213"/>
    </location>
</feature>
<feature type="zinc finger region" description="A20-type" evidence="5">
    <location>
        <begin position="8"/>
        <end position="42"/>
    </location>
</feature>
<feature type="zinc finger region" description="AN1-type" evidence="4">
    <location>
        <begin position="148"/>
        <end position="194"/>
    </location>
</feature>
<feature type="region of interest" description="Disordered" evidence="6">
    <location>
        <begin position="39"/>
        <end position="149"/>
    </location>
</feature>
<feature type="compositionally biased region" description="Polar residues" evidence="6">
    <location>
        <begin position="40"/>
        <end position="66"/>
    </location>
</feature>
<feature type="compositionally biased region" description="Low complexity" evidence="6">
    <location>
        <begin position="120"/>
        <end position="138"/>
    </location>
</feature>
<feature type="compositionally biased region" description="Basic and acidic residues" evidence="6">
    <location>
        <begin position="139"/>
        <end position="148"/>
    </location>
</feature>
<feature type="binding site" evidence="5">
    <location>
        <position position="14"/>
    </location>
    <ligand>
        <name>Zn(2+)</name>
        <dbReference type="ChEBI" id="CHEBI:29105"/>
        <label>1</label>
    </ligand>
</feature>
<feature type="binding site" evidence="5">
    <location>
        <position position="18"/>
    </location>
    <ligand>
        <name>Zn(2+)</name>
        <dbReference type="ChEBI" id="CHEBI:29105"/>
        <label>1</label>
    </ligand>
</feature>
<feature type="binding site" evidence="5">
    <location>
        <position position="30"/>
    </location>
    <ligand>
        <name>Zn(2+)</name>
        <dbReference type="ChEBI" id="CHEBI:29105"/>
        <label>1</label>
    </ligand>
</feature>
<feature type="binding site" evidence="5">
    <location>
        <position position="33"/>
    </location>
    <ligand>
        <name>Zn(2+)</name>
        <dbReference type="ChEBI" id="CHEBI:29105"/>
        <label>1</label>
    </ligand>
</feature>
<feature type="binding site" evidence="4">
    <location>
        <position position="154"/>
    </location>
    <ligand>
        <name>Zn(2+)</name>
        <dbReference type="ChEBI" id="CHEBI:29105"/>
        <label>2</label>
    </ligand>
</feature>
<feature type="binding site" evidence="4">
    <location>
        <position position="157"/>
    </location>
    <ligand>
        <name>Zn(2+)</name>
        <dbReference type="ChEBI" id="CHEBI:29105"/>
        <label>2</label>
    </ligand>
</feature>
<feature type="binding site" evidence="4">
    <location>
        <position position="168"/>
    </location>
    <ligand>
        <name>Zn(2+)</name>
        <dbReference type="ChEBI" id="CHEBI:29105"/>
        <label>3</label>
    </ligand>
</feature>
<feature type="binding site" evidence="4">
    <location>
        <position position="170"/>
    </location>
    <ligand>
        <name>Zn(2+)</name>
        <dbReference type="ChEBI" id="CHEBI:29105"/>
        <label>3</label>
    </ligand>
</feature>
<feature type="binding site" evidence="4">
    <location>
        <position position="175"/>
    </location>
    <ligand>
        <name>Zn(2+)</name>
        <dbReference type="ChEBI" id="CHEBI:29105"/>
        <label>2</label>
    </ligand>
</feature>
<feature type="binding site" evidence="4">
    <location>
        <position position="178"/>
    </location>
    <ligand>
        <name>Zn(2+)</name>
        <dbReference type="ChEBI" id="CHEBI:29105"/>
        <label>2</label>
    </ligand>
</feature>
<feature type="binding site" evidence="4">
    <location>
        <position position="184"/>
    </location>
    <ligand>
        <name>Zn(2+)</name>
        <dbReference type="ChEBI" id="CHEBI:29105"/>
        <label>3</label>
    </ligand>
</feature>
<feature type="binding site" evidence="4">
    <location>
        <position position="186"/>
    </location>
    <ligand>
        <name>Zn(2+)</name>
        <dbReference type="ChEBI" id="CHEBI:29105"/>
        <label>3</label>
    </ligand>
</feature>
<feature type="modified residue" description="Phosphoserine" evidence="2">
    <location>
        <position position="48"/>
    </location>
</feature>
<feature type="modified residue" description="Phosphoserine" evidence="3">
    <location>
        <position position="58"/>
    </location>
</feature>
<feature type="modified residue" description="N6-acetyllysine" evidence="3">
    <location>
        <position position="209"/>
    </location>
</feature>
<feature type="strand" evidence="8">
    <location>
        <begin position="19"/>
        <end position="21"/>
    </location>
</feature>
<feature type="turn" evidence="8">
    <location>
        <begin position="24"/>
        <end position="27"/>
    </location>
</feature>
<feature type="helix" evidence="8">
    <location>
        <begin position="31"/>
        <end position="44"/>
    </location>
</feature>
<reference key="1">
    <citation type="journal article" date="2004" name="Nature">
        <title>Genome sequence of the Brown Norway rat yields insights into mammalian evolution.</title>
        <authorList>
            <person name="Gibbs R.A."/>
            <person name="Weinstock G.M."/>
            <person name="Metzker M.L."/>
            <person name="Muzny D.M."/>
            <person name="Sodergren E.J."/>
            <person name="Scherer S."/>
            <person name="Scott G."/>
            <person name="Steffen D."/>
            <person name="Worley K.C."/>
            <person name="Burch P.E."/>
            <person name="Okwuonu G."/>
            <person name="Hines S."/>
            <person name="Lewis L."/>
            <person name="Deramo C."/>
            <person name="Delgado O."/>
            <person name="Dugan-Rocha S."/>
            <person name="Miner G."/>
            <person name="Morgan M."/>
            <person name="Hawes A."/>
            <person name="Gill R."/>
            <person name="Holt R.A."/>
            <person name="Adams M.D."/>
            <person name="Amanatides P.G."/>
            <person name="Baden-Tillson H."/>
            <person name="Barnstead M."/>
            <person name="Chin S."/>
            <person name="Evans C.A."/>
            <person name="Ferriera S."/>
            <person name="Fosler C."/>
            <person name="Glodek A."/>
            <person name="Gu Z."/>
            <person name="Jennings D."/>
            <person name="Kraft C.L."/>
            <person name="Nguyen T."/>
            <person name="Pfannkoch C.M."/>
            <person name="Sitter C."/>
            <person name="Sutton G.G."/>
            <person name="Venter J.C."/>
            <person name="Woodage T."/>
            <person name="Smith D."/>
            <person name="Lee H.-M."/>
            <person name="Gustafson E."/>
            <person name="Cahill P."/>
            <person name="Kana A."/>
            <person name="Doucette-Stamm L."/>
            <person name="Weinstock K."/>
            <person name="Fechtel K."/>
            <person name="Weiss R.B."/>
            <person name="Dunn D.M."/>
            <person name="Green E.D."/>
            <person name="Blakesley R.W."/>
            <person name="Bouffard G.G."/>
            <person name="De Jong P.J."/>
            <person name="Osoegawa K."/>
            <person name="Zhu B."/>
            <person name="Marra M."/>
            <person name="Schein J."/>
            <person name="Bosdet I."/>
            <person name="Fjell C."/>
            <person name="Jones S."/>
            <person name="Krzywinski M."/>
            <person name="Mathewson C."/>
            <person name="Siddiqui A."/>
            <person name="Wye N."/>
            <person name="McPherson J."/>
            <person name="Zhao S."/>
            <person name="Fraser C.M."/>
            <person name="Shetty J."/>
            <person name="Shatsman S."/>
            <person name="Geer K."/>
            <person name="Chen Y."/>
            <person name="Abramzon S."/>
            <person name="Nierman W.C."/>
            <person name="Havlak P.H."/>
            <person name="Chen R."/>
            <person name="Durbin K.J."/>
            <person name="Egan A."/>
            <person name="Ren Y."/>
            <person name="Song X.-Z."/>
            <person name="Li B."/>
            <person name="Liu Y."/>
            <person name="Qin X."/>
            <person name="Cawley S."/>
            <person name="Cooney A.J."/>
            <person name="D'Souza L.M."/>
            <person name="Martin K."/>
            <person name="Wu J.Q."/>
            <person name="Gonzalez-Garay M.L."/>
            <person name="Jackson A.R."/>
            <person name="Kalafus K.J."/>
            <person name="McLeod M.P."/>
            <person name="Milosavljevic A."/>
            <person name="Virk D."/>
            <person name="Volkov A."/>
            <person name="Wheeler D.A."/>
            <person name="Zhang Z."/>
            <person name="Bailey J.A."/>
            <person name="Eichler E.E."/>
            <person name="Tuzun E."/>
            <person name="Birney E."/>
            <person name="Mongin E."/>
            <person name="Ureta-Vidal A."/>
            <person name="Woodwark C."/>
            <person name="Zdobnov E."/>
            <person name="Bork P."/>
            <person name="Suyama M."/>
            <person name="Torrents D."/>
            <person name="Alexandersson M."/>
            <person name="Trask B.J."/>
            <person name="Young J.M."/>
            <person name="Huang H."/>
            <person name="Wang H."/>
            <person name="Xing H."/>
            <person name="Daniels S."/>
            <person name="Gietzen D."/>
            <person name="Schmidt J."/>
            <person name="Stevens K."/>
            <person name="Vitt U."/>
            <person name="Wingrove J."/>
            <person name="Camara F."/>
            <person name="Mar Alba M."/>
            <person name="Abril J.F."/>
            <person name="Guigo R."/>
            <person name="Smit A."/>
            <person name="Dubchak I."/>
            <person name="Rubin E.M."/>
            <person name="Couronne O."/>
            <person name="Poliakov A."/>
            <person name="Huebner N."/>
            <person name="Ganten D."/>
            <person name="Goesele C."/>
            <person name="Hummel O."/>
            <person name="Kreitler T."/>
            <person name="Lee Y.-A."/>
            <person name="Monti J."/>
            <person name="Schulz H."/>
            <person name="Zimdahl H."/>
            <person name="Himmelbauer H."/>
            <person name="Lehrach H."/>
            <person name="Jacob H.J."/>
            <person name="Bromberg S."/>
            <person name="Gullings-Handley J."/>
            <person name="Jensen-Seaman M.I."/>
            <person name="Kwitek A.E."/>
            <person name="Lazar J."/>
            <person name="Pasko D."/>
            <person name="Tonellato P.J."/>
            <person name="Twigger S."/>
            <person name="Ponting C.P."/>
            <person name="Duarte J.M."/>
            <person name="Rice S."/>
            <person name="Goodstadt L."/>
            <person name="Beatson S.A."/>
            <person name="Emes R.D."/>
            <person name="Winter E.E."/>
            <person name="Webber C."/>
            <person name="Brandt P."/>
            <person name="Nyakatura G."/>
            <person name="Adetobi M."/>
            <person name="Chiaromonte F."/>
            <person name="Elnitski L."/>
            <person name="Eswara P."/>
            <person name="Hardison R.C."/>
            <person name="Hou M."/>
            <person name="Kolbe D."/>
            <person name="Makova K."/>
            <person name="Miller W."/>
            <person name="Nekrutenko A."/>
            <person name="Riemer C."/>
            <person name="Schwartz S."/>
            <person name="Taylor J."/>
            <person name="Yang S."/>
            <person name="Zhang Y."/>
            <person name="Lindpaintner K."/>
            <person name="Andrews T.D."/>
            <person name="Caccamo M."/>
            <person name="Clamp M."/>
            <person name="Clarke L."/>
            <person name="Curwen V."/>
            <person name="Durbin R.M."/>
            <person name="Eyras E."/>
            <person name="Searle S.M."/>
            <person name="Cooper G.M."/>
            <person name="Batzoglou S."/>
            <person name="Brudno M."/>
            <person name="Sidow A."/>
            <person name="Stone E.A."/>
            <person name="Payseur B.A."/>
            <person name="Bourque G."/>
            <person name="Lopez-Otin C."/>
            <person name="Puente X.S."/>
            <person name="Chakrabarti K."/>
            <person name="Chatterji S."/>
            <person name="Dewey C."/>
            <person name="Pachter L."/>
            <person name="Bray N."/>
            <person name="Yap V.B."/>
            <person name="Caspi A."/>
            <person name="Tesler G."/>
            <person name="Pevzner P.A."/>
            <person name="Haussler D."/>
            <person name="Roskin K.M."/>
            <person name="Baertsch R."/>
            <person name="Clawson H."/>
            <person name="Furey T.S."/>
            <person name="Hinrichs A.S."/>
            <person name="Karolchik D."/>
            <person name="Kent W.J."/>
            <person name="Rosenbloom K.R."/>
            <person name="Trumbower H."/>
            <person name="Weirauch M."/>
            <person name="Cooper D.N."/>
            <person name="Stenson P.D."/>
            <person name="Ma B."/>
            <person name="Brent M."/>
            <person name="Arumugam M."/>
            <person name="Shteynberg D."/>
            <person name="Copley R.R."/>
            <person name="Taylor M.S."/>
            <person name="Riethman H."/>
            <person name="Mudunuri U."/>
            <person name="Peterson J."/>
            <person name="Guyer M."/>
            <person name="Felsenfeld A."/>
            <person name="Old S."/>
            <person name="Mockrin S."/>
            <person name="Collins F.S."/>
        </authorList>
    </citation>
    <scope>NUCLEOTIDE SEQUENCE [LARGE SCALE GENOMIC DNA]</scope>
    <source>
        <strain>Brown Norway</strain>
    </source>
</reference>
<reference key="2">
    <citation type="submission" date="2005-07" db="EMBL/GenBank/DDBJ databases">
        <authorList>
            <person name="Mural R.J."/>
            <person name="Adams M.D."/>
            <person name="Myers E.W."/>
            <person name="Smith H.O."/>
            <person name="Venter J.C."/>
        </authorList>
    </citation>
    <scope>NUCLEOTIDE SEQUENCE [LARGE SCALE GENOMIC DNA]</scope>
    <source>
        <strain>Brown Norway</strain>
    </source>
</reference>
<reference key="3">
    <citation type="journal article" date="2004" name="Genome Res.">
        <title>The status, quality, and expansion of the NIH full-length cDNA project: the Mammalian Gene Collection (MGC).</title>
        <authorList>
            <consortium name="The MGC Project Team"/>
        </authorList>
    </citation>
    <scope>NUCLEOTIDE SEQUENCE [LARGE SCALE MRNA]</scope>
    <source>
        <tissue>Kidney</tissue>
    </source>
</reference>
<reference key="4">
    <citation type="journal article" date="2011" name="Biochemistry">
        <title>Independent interactions of ubiquitin-binding domains in a ubiquitin-mediated ternary complex.</title>
        <authorList>
            <person name="Garner T.P."/>
            <person name="Strachan J."/>
            <person name="Shedden E.C."/>
            <person name="Long J.E."/>
            <person name="Cavey J.R."/>
            <person name="Shaw B."/>
            <person name="Layfield R."/>
            <person name="Searle M.S."/>
        </authorList>
    </citation>
    <scope>STRUCTURE BY NMR OF 1-60 IN COMPLEX WITH UBIQUITIN</scope>
    <scope>IDENTIFICATION IN A COMPLEX WITH SQSTM1 AND UBIQUITIN</scope>
    <scope>SUBCELLULAR LOCATION</scope>
    <scope>IDENTIFICATION BY MASS SPECTROMETRY</scope>
</reference>
<evidence type="ECO:0000250" key="1"/>
<evidence type="ECO:0000250" key="2">
    <source>
        <dbReference type="UniProtKB" id="O76080"/>
    </source>
</evidence>
<evidence type="ECO:0000250" key="3">
    <source>
        <dbReference type="UniProtKB" id="O88878"/>
    </source>
</evidence>
<evidence type="ECO:0000255" key="4">
    <source>
        <dbReference type="PROSITE-ProRule" id="PRU00449"/>
    </source>
</evidence>
<evidence type="ECO:0000255" key="5">
    <source>
        <dbReference type="PROSITE-ProRule" id="PRU00451"/>
    </source>
</evidence>
<evidence type="ECO:0000256" key="6">
    <source>
        <dbReference type="SAM" id="MobiDB-lite"/>
    </source>
</evidence>
<evidence type="ECO:0000269" key="7">
    <source>
    </source>
</evidence>
<evidence type="ECO:0007829" key="8">
    <source>
        <dbReference type="PDB" id="2KZY"/>
    </source>
</evidence>
<name>ZFAN5_RAT</name>
<gene>
    <name type="primary">Zfand5</name>
    <name type="synonym">Zfp216</name>
    <name type="synonym">Znf216</name>
</gene>
<keyword id="KW-0002">3D-structure</keyword>
<keyword id="KW-0007">Acetylation</keyword>
<keyword id="KW-0963">Cytoplasm</keyword>
<keyword id="KW-0479">Metal-binding</keyword>
<keyword id="KW-0597">Phosphoprotein</keyword>
<keyword id="KW-1185">Reference proteome</keyword>
<keyword id="KW-0833">Ubl conjugation pathway</keyword>
<keyword id="KW-0862">Zinc</keyword>
<keyword id="KW-0863">Zinc-finger</keyword>
<proteinExistence type="evidence at protein level"/>
<protein>
    <recommendedName>
        <fullName>AN1-type zinc finger protein 5</fullName>
    </recommendedName>
    <alternativeName>
        <fullName>Zinc finger protein 216</fullName>
    </alternativeName>
</protein>
<sequence>MAQETNQTPGPMLCSTGCGFYGNPRTNGMCSVCYKEHLQRQQNSGRMSPMGTASGSNSPTSDSASVQRADATLNNCEGAAGSTSEKSRNVPVAALPVTQQMTEMSISREDKITSPKTEVSEPVVTQPSPSVSQPSSSQSEEKAPELPKPKKNRCFMCRKKVGLTGFDCRCGNLFCGLHRYSDKHNCPYDYKAEAAAKIRKENPVVVAEKIQRI</sequence>
<accession>B5DF11</accession>
<dbReference type="EMBL" id="CH473953">
    <property type="protein sequence ID" value="EDM13001.1"/>
    <property type="molecule type" value="Genomic_DNA"/>
</dbReference>
<dbReference type="EMBL" id="BC168882">
    <property type="protein sequence ID" value="AAI68882.1"/>
    <property type="molecule type" value="mRNA"/>
</dbReference>
<dbReference type="RefSeq" id="NP_001388327.1">
    <property type="nucleotide sequence ID" value="NM_001401398.2"/>
</dbReference>
<dbReference type="RefSeq" id="XP_008758519.1">
    <property type="nucleotide sequence ID" value="XM_008760297.2"/>
</dbReference>
<dbReference type="RefSeq" id="XP_038964886.1">
    <property type="nucleotide sequence ID" value="XM_039108958.2"/>
</dbReference>
<dbReference type="PDB" id="2KZY">
    <property type="method" value="NMR"/>
    <property type="chains" value="A=1-60"/>
</dbReference>
<dbReference type="PDB" id="2L00">
    <property type="method" value="NMR"/>
    <property type="chains" value="A=1-60"/>
</dbReference>
<dbReference type="PDBsum" id="2KZY"/>
<dbReference type="PDBsum" id="2L00"/>
<dbReference type="BMRB" id="B5DF11"/>
<dbReference type="SMR" id="B5DF11"/>
<dbReference type="FunCoup" id="B5DF11">
    <property type="interactions" value="2646"/>
</dbReference>
<dbReference type="STRING" id="10116.ENSRNOP00000024583"/>
<dbReference type="PhosphoSitePlus" id="B5DF11"/>
<dbReference type="PaxDb" id="10116-ENSRNOP00000024583"/>
<dbReference type="PeptideAtlas" id="B5DF11"/>
<dbReference type="Ensembl" id="ENSRNOT00000024583.6">
    <property type="protein sequence ID" value="ENSRNOP00000024583.4"/>
    <property type="gene ID" value="ENSRNOG00000018107.6"/>
</dbReference>
<dbReference type="GeneID" id="293960"/>
<dbReference type="AGR" id="RGD:1310776"/>
<dbReference type="RGD" id="1310776">
    <property type="gene designation" value="Zfand5"/>
</dbReference>
<dbReference type="eggNOG" id="KOG3173">
    <property type="taxonomic scope" value="Eukaryota"/>
</dbReference>
<dbReference type="GeneTree" id="ENSGT00940000156165"/>
<dbReference type="HOGENOM" id="CLU_057016_1_0_1"/>
<dbReference type="InParanoid" id="B5DF11"/>
<dbReference type="OMA" id="VLCENNC"/>
<dbReference type="PhylomeDB" id="B5DF11"/>
<dbReference type="TreeFam" id="TF313612"/>
<dbReference type="EvolutionaryTrace" id="B5DF11"/>
<dbReference type="PRO" id="PR:B5DF11"/>
<dbReference type="Proteomes" id="UP000002494">
    <property type="component" value="Chromosome 1"/>
</dbReference>
<dbReference type="Proteomes" id="UP000234681">
    <property type="component" value="Chromosome 1"/>
</dbReference>
<dbReference type="Bgee" id="ENSRNOG00000018107">
    <property type="expression patterns" value="Expressed in Ammon's horn and 20 other cell types or tissues"/>
</dbReference>
<dbReference type="GO" id="GO:0005737">
    <property type="term" value="C:cytoplasm"/>
    <property type="evidence" value="ECO:0007669"/>
    <property type="project" value="UniProtKB-SubCell"/>
</dbReference>
<dbReference type="GO" id="GO:0003677">
    <property type="term" value="F:DNA binding"/>
    <property type="evidence" value="ECO:0007669"/>
    <property type="project" value="InterPro"/>
</dbReference>
<dbReference type="GO" id="GO:0008270">
    <property type="term" value="F:zinc ion binding"/>
    <property type="evidence" value="ECO:0007669"/>
    <property type="project" value="UniProtKB-KW"/>
</dbReference>
<dbReference type="GO" id="GO:0060324">
    <property type="term" value="P:face development"/>
    <property type="evidence" value="ECO:0000266"/>
    <property type="project" value="RGD"/>
</dbReference>
<dbReference type="GO" id="GO:0010761">
    <property type="term" value="P:fibroblast migration"/>
    <property type="evidence" value="ECO:0000266"/>
    <property type="project" value="RGD"/>
</dbReference>
<dbReference type="GO" id="GO:0001701">
    <property type="term" value="P:in utero embryonic development"/>
    <property type="evidence" value="ECO:0000266"/>
    <property type="project" value="RGD"/>
</dbReference>
<dbReference type="GO" id="GO:0048008">
    <property type="term" value="P:platelet-derived growth factor receptor signaling pathway"/>
    <property type="evidence" value="ECO:0000266"/>
    <property type="project" value="RGD"/>
</dbReference>
<dbReference type="GO" id="GO:0003016">
    <property type="term" value="P:respiratory system process"/>
    <property type="evidence" value="ECO:0000266"/>
    <property type="project" value="RGD"/>
</dbReference>
<dbReference type="GO" id="GO:0048705">
    <property type="term" value="P:skeletal system morphogenesis"/>
    <property type="evidence" value="ECO:0000266"/>
    <property type="project" value="RGD"/>
</dbReference>
<dbReference type="GO" id="GO:0048745">
    <property type="term" value="P:smooth muscle tissue development"/>
    <property type="evidence" value="ECO:0000266"/>
    <property type="project" value="RGD"/>
</dbReference>
<dbReference type="GO" id="GO:0001944">
    <property type="term" value="P:vasculature development"/>
    <property type="evidence" value="ECO:0000266"/>
    <property type="project" value="RGD"/>
</dbReference>
<dbReference type="FunFam" id="1.20.5.4770:FF:000001">
    <property type="entry name" value="Zinc finger AN1-type containing 6"/>
    <property type="match status" value="1"/>
</dbReference>
<dbReference type="FunFam" id="4.10.1110.10:FF:000001">
    <property type="entry name" value="Zinc finger AN1-type containing 6"/>
    <property type="match status" value="1"/>
</dbReference>
<dbReference type="Gene3D" id="1.20.5.4770">
    <property type="match status" value="1"/>
</dbReference>
<dbReference type="Gene3D" id="4.10.1110.10">
    <property type="entry name" value="AN1-like Zinc finger"/>
    <property type="match status" value="1"/>
</dbReference>
<dbReference type="InterPro" id="IPR035896">
    <property type="entry name" value="AN1-like_Znf"/>
</dbReference>
<dbReference type="InterPro" id="IPR050652">
    <property type="entry name" value="AN1_A20_ZnFinger"/>
</dbReference>
<dbReference type="InterPro" id="IPR002653">
    <property type="entry name" value="Znf_A20"/>
</dbReference>
<dbReference type="InterPro" id="IPR000058">
    <property type="entry name" value="Znf_AN1"/>
</dbReference>
<dbReference type="PANTHER" id="PTHR10634">
    <property type="entry name" value="AN1-TYPE ZINC FINGER PROTEIN"/>
    <property type="match status" value="1"/>
</dbReference>
<dbReference type="PANTHER" id="PTHR10634:SF26">
    <property type="entry name" value="AN1-TYPE ZINC FINGER PROTEIN 5"/>
    <property type="match status" value="1"/>
</dbReference>
<dbReference type="Pfam" id="PF01754">
    <property type="entry name" value="zf-A20"/>
    <property type="match status" value="1"/>
</dbReference>
<dbReference type="Pfam" id="PF01428">
    <property type="entry name" value="zf-AN1"/>
    <property type="match status" value="1"/>
</dbReference>
<dbReference type="SMART" id="SM00259">
    <property type="entry name" value="ZnF_A20"/>
    <property type="match status" value="1"/>
</dbReference>
<dbReference type="SMART" id="SM00154">
    <property type="entry name" value="ZnF_AN1"/>
    <property type="match status" value="1"/>
</dbReference>
<dbReference type="SUPFAM" id="SSF118310">
    <property type="entry name" value="AN1-like Zinc finger"/>
    <property type="match status" value="1"/>
</dbReference>
<dbReference type="SUPFAM" id="SSF57716">
    <property type="entry name" value="Glucocorticoid receptor-like (DNA-binding domain)"/>
    <property type="match status" value="1"/>
</dbReference>
<dbReference type="PROSITE" id="PS51036">
    <property type="entry name" value="ZF_A20"/>
    <property type="match status" value="1"/>
</dbReference>
<dbReference type="PROSITE" id="PS51039">
    <property type="entry name" value="ZF_AN1"/>
    <property type="match status" value="1"/>
</dbReference>
<comment type="function">
    <text evidence="1">Involved in protein degradation via the ubiquitin-proteasome system. May act by anchoring ubiquitinated proteins to the proteasome. Plays a role in ubiquitin-mediated protein degradation during muscle atrophy. Plays a role in the regulation of NF-kappa-B activation and apoptosis. Inhibits NF-kappa-B activation triggered by overexpression of RIPK1 and TRAF6 but not of RELA. Also inhibits tumor necrosis factor (TNF), IL-1 and TLR4-induced NF-kappa-B activation in a dose-dependent manner. Overexpression sensitizes cells to TNF-induced apoptosis. Is a potent inhibitory factor for osteoclast differentiation (By similarity).</text>
</comment>
<comment type="subunit">
    <text evidence="1 7">Homooligomer and/or heterooligomer. Interacts (via A20-type domain) with IKBKG and RIPK1 and with TRAF6 (via AN1-type domain) (By similarity). Interacts with ubiquitin and polyubiquitinated proteins. Identified in a heterotrimeric complex with ubiquitin and SQSTM1, where ZFAND5 and SQSTM1 both interact with the same ubiquitin molecule.</text>
</comment>
<comment type="subcellular location">
    <subcellularLocation>
        <location evidence="7">Cytoplasm</location>
    </subcellularLocation>
</comment>
<comment type="domain">
    <text evidence="1">The A20-type zinc finger directly binds polyubiquitin chains and associates with the 26S proteasome. The zinc-finger A20-type domain is essential for inhibition of NF-kappa-B activation (By similarity).</text>
</comment>
<organism>
    <name type="scientific">Rattus norvegicus</name>
    <name type="common">Rat</name>
    <dbReference type="NCBI Taxonomy" id="10116"/>
    <lineage>
        <taxon>Eukaryota</taxon>
        <taxon>Metazoa</taxon>
        <taxon>Chordata</taxon>
        <taxon>Craniata</taxon>
        <taxon>Vertebrata</taxon>
        <taxon>Euteleostomi</taxon>
        <taxon>Mammalia</taxon>
        <taxon>Eutheria</taxon>
        <taxon>Euarchontoglires</taxon>
        <taxon>Glires</taxon>
        <taxon>Rodentia</taxon>
        <taxon>Myomorpha</taxon>
        <taxon>Muroidea</taxon>
        <taxon>Muridae</taxon>
        <taxon>Murinae</taxon>
        <taxon>Rattus</taxon>
    </lineage>
</organism>